<accession>Q04N22</accession>
<dbReference type="EC" id="6.3.3.1" evidence="1"/>
<dbReference type="EMBL" id="CP000410">
    <property type="protein sequence ID" value="ABJ54031.1"/>
    <property type="molecule type" value="Genomic_DNA"/>
</dbReference>
<dbReference type="RefSeq" id="WP_000182582.1">
    <property type="nucleotide sequence ID" value="NZ_JAMLJR010000017.1"/>
</dbReference>
<dbReference type="SMR" id="Q04N22"/>
<dbReference type="PaxDb" id="373153-SPD_0054"/>
<dbReference type="KEGG" id="spd:SPD_0054"/>
<dbReference type="eggNOG" id="COG0150">
    <property type="taxonomic scope" value="Bacteria"/>
</dbReference>
<dbReference type="HOGENOM" id="CLU_047116_0_0_9"/>
<dbReference type="BioCyc" id="SPNE373153:G1G6V-54-MONOMER"/>
<dbReference type="UniPathway" id="UPA00074">
    <property type="reaction ID" value="UER00129"/>
</dbReference>
<dbReference type="Proteomes" id="UP000001452">
    <property type="component" value="Chromosome"/>
</dbReference>
<dbReference type="GO" id="GO:0005829">
    <property type="term" value="C:cytosol"/>
    <property type="evidence" value="ECO:0007669"/>
    <property type="project" value="TreeGrafter"/>
</dbReference>
<dbReference type="GO" id="GO:0005524">
    <property type="term" value="F:ATP binding"/>
    <property type="evidence" value="ECO:0007669"/>
    <property type="project" value="UniProtKB-KW"/>
</dbReference>
<dbReference type="GO" id="GO:0004637">
    <property type="term" value="F:phosphoribosylamine-glycine ligase activity"/>
    <property type="evidence" value="ECO:0007669"/>
    <property type="project" value="TreeGrafter"/>
</dbReference>
<dbReference type="GO" id="GO:0004641">
    <property type="term" value="F:phosphoribosylformylglycinamidine cyclo-ligase activity"/>
    <property type="evidence" value="ECO:0007669"/>
    <property type="project" value="UniProtKB-UniRule"/>
</dbReference>
<dbReference type="GO" id="GO:0006189">
    <property type="term" value="P:'de novo' IMP biosynthetic process"/>
    <property type="evidence" value="ECO:0007669"/>
    <property type="project" value="UniProtKB-UniRule"/>
</dbReference>
<dbReference type="GO" id="GO:0046084">
    <property type="term" value="P:adenine biosynthetic process"/>
    <property type="evidence" value="ECO:0007669"/>
    <property type="project" value="TreeGrafter"/>
</dbReference>
<dbReference type="CDD" id="cd02196">
    <property type="entry name" value="PurM"/>
    <property type="match status" value="1"/>
</dbReference>
<dbReference type="FunFam" id="3.30.1330.10:FF:000001">
    <property type="entry name" value="Phosphoribosylformylglycinamidine cyclo-ligase"/>
    <property type="match status" value="1"/>
</dbReference>
<dbReference type="FunFam" id="3.90.650.10:FF:000011">
    <property type="entry name" value="Phosphoribosylformylglycinamidine cyclo-ligase"/>
    <property type="match status" value="1"/>
</dbReference>
<dbReference type="Gene3D" id="3.90.650.10">
    <property type="entry name" value="PurM-like C-terminal domain"/>
    <property type="match status" value="1"/>
</dbReference>
<dbReference type="Gene3D" id="3.30.1330.10">
    <property type="entry name" value="PurM-like, N-terminal domain"/>
    <property type="match status" value="1"/>
</dbReference>
<dbReference type="HAMAP" id="MF_00741">
    <property type="entry name" value="AIRS"/>
    <property type="match status" value="1"/>
</dbReference>
<dbReference type="InterPro" id="IPR010918">
    <property type="entry name" value="PurM-like_C_dom"/>
</dbReference>
<dbReference type="InterPro" id="IPR036676">
    <property type="entry name" value="PurM-like_C_sf"/>
</dbReference>
<dbReference type="InterPro" id="IPR016188">
    <property type="entry name" value="PurM-like_N"/>
</dbReference>
<dbReference type="InterPro" id="IPR036921">
    <property type="entry name" value="PurM-like_N_sf"/>
</dbReference>
<dbReference type="InterPro" id="IPR004733">
    <property type="entry name" value="PurM_cligase"/>
</dbReference>
<dbReference type="NCBIfam" id="TIGR00878">
    <property type="entry name" value="purM"/>
    <property type="match status" value="1"/>
</dbReference>
<dbReference type="PANTHER" id="PTHR10520:SF12">
    <property type="entry name" value="TRIFUNCTIONAL PURINE BIOSYNTHETIC PROTEIN ADENOSINE-3"/>
    <property type="match status" value="1"/>
</dbReference>
<dbReference type="PANTHER" id="PTHR10520">
    <property type="entry name" value="TRIFUNCTIONAL PURINE BIOSYNTHETIC PROTEIN ADENOSINE-3-RELATED"/>
    <property type="match status" value="1"/>
</dbReference>
<dbReference type="Pfam" id="PF00586">
    <property type="entry name" value="AIRS"/>
    <property type="match status" value="1"/>
</dbReference>
<dbReference type="Pfam" id="PF02769">
    <property type="entry name" value="AIRS_C"/>
    <property type="match status" value="1"/>
</dbReference>
<dbReference type="SUPFAM" id="SSF56042">
    <property type="entry name" value="PurM C-terminal domain-like"/>
    <property type="match status" value="1"/>
</dbReference>
<dbReference type="SUPFAM" id="SSF55326">
    <property type="entry name" value="PurM N-terminal domain-like"/>
    <property type="match status" value="1"/>
</dbReference>
<keyword id="KW-0067">ATP-binding</keyword>
<keyword id="KW-0963">Cytoplasm</keyword>
<keyword id="KW-0436">Ligase</keyword>
<keyword id="KW-0547">Nucleotide-binding</keyword>
<keyword id="KW-0658">Purine biosynthesis</keyword>
<keyword id="KW-1185">Reference proteome</keyword>
<sequence length="340" mass="36530">MTNKNAYAQSGVDVEAGYEVVERIKKHVARTERAGVMGALGGFGGMFDLSKTGVKEPVLISGTDGVGTKLMLAIKYDKHDTIGQDCVAMCVNDIIAAGAEPLYFLDYVATGKNEPAKLEQVVAGVAEGCVQAGAALIGGETAEMPGMYGEDDYDLAGFAVGVAEKSQIIDGSKVVEGDVLLGLVSSGIHSNGYSLVRRVFADYTGEEVLPELEGKKLKEVLLEPTRIYVKAVLPLIKEELVNGIAHITGGGFIENVPRMFADDLAAEIDESKVPVLPIFKALEKYGQIKHEEMFEIFNMGVGLMLAVSPENVERVKELLDEAVYEIGRIVKKENESVIIK</sequence>
<organism>
    <name type="scientific">Streptococcus pneumoniae serotype 2 (strain D39 / NCTC 7466)</name>
    <dbReference type="NCBI Taxonomy" id="373153"/>
    <lineage>
        <taxon>Bacteria</taxon>
        <taxon>Bacillati</taxon>
        <taxon>Bacillota</taxon>
        <taxon>Bacilli</taxon>
        <taxon>Lactobacillales</taxon>
        <taxon>Streptococcaceae</taxon>
        <taxon>Streptococcus</taxon>
    </lineage>
</organism>
<gene>
    <name evidence="1" type="primary">purM</name>
    <name type="ordered locus">SPD_0054</name>
</gene>
<comment type="catalytic activity">
    <reaction evidence="1">
        <text>2-formamido-N(1)-(5-O-phospho-beta-D-ribosyl)acetamidine + ATP = 5-amino-1-(5-phospho-beta-D-ribosyl)imidazole + ADP + phosphate + H(+)</text>
        <dbReference type="Rhea" id="RHEA:23032"/>
        <dbReference type="ChEBI" id="CHEBI:15378"/>
        <dbReference type="ChEBI" id="CHEBI:30616"/>
        <dbReference type="ChEBI" id="CHEBI:43474"/>
        <dbReference type="ChEBI" id="CHEBI:137981"/>
        <dbReference type="ChEBI" id="CHEBI:147287"/>
        <dbReference type="ChEBI" id="CHEBI:456216"/>
        <dbReference type="EC" id="6.3.3.1"/>
    </reaction>
</comment>
<comment type="pathway">
    <text evidence="1">Purine metabolism; IMP biosynthesis via de novo pathway; 5-amino-1-(5-phospho-D-ribosyl)imidazole from N(2)-formyl-N(1)-(5-phospho-D-ribosyl)glycinamide: step 2/2.</text>
</comment>
<comment type="subcellular location">
    <subcellularLocation>
        <location evidence="1">Cytoplasm</location>
    </subcellularLocation>
</comment>
<comment type="similarity">
    <text evidence="1">Belongs to the AIR synthase family.</text>
</comment>
<protein>
    <recommendedName>
        <fullName evidence="1">Phosphoribosylformylglycinamidine cyclo-ligase</fullName>
        <ecNumber evidence="1">6.3.3.1</ecNumber>
    </recommendedName>
    <alternativeName>
        <fullName evidence="1">AIR synthase</fullName>
    </alternativeName>
    <alternativeName>
        <fullName evidence="1">AIRS</fullName>
    </alternativeName>
    <alternativeName>
        <fullName evidence="1">Phosphoribosyl-aminoimidazole synthetase</fullName>
    </alternativeName>
</protein>
<proteinExistence type="inferred from homology"/>
<reference key="1">
    <citation type="journal article" date="2007" name="J. Bacteriol.">
        <title>Genome sequence of Avery's virulent serotype 2 strain D39 of Streptococcus pneumoniae and comparison with that of unencapsulated laboratory strain R6.</title>
        <authorList>
            <person name="Lanie J.A."/>
            <person name="Ng W.-L."/>
            <person name="Kazmierczak K.M."/>
            <person name="Andrzejewski T.M."/>
            <person name="Davidsen T.M."/>
            <person name="Wayne K.J."/>
            <person name="Tettelin H."/>
            <person name="Glass J.I."/>
            <person name="Winkler M.E."/>
        </authorList>
    </citation>
    <scope>NUCLEOTIDE SEQUENCE [LARGE SCALE GENOMIC DNA]</scope>
    <source>
        <strain>D39 / NCTC 7466</strain>
    </source>
</reference>
<feature type="chain" id="PRO_1000046475" description="Phosphoribosylformylglycinamidine cyclo-ligase">
    <location>
        <begin position="1"/>
        <end position="340"/>
    </location>
</feature>
<evidence type="ECO:0000255" key="1">
    <source>
        <dbReference type="HAMAP-Rule" id="MF_00741"/>
    </source>
</evidence>
<name>PUR5_STRP2</name>